<feature type="chain" id="PRO_0000234181" description="Urease subunit alpha">
    <location>
        <begin position="1"/>
        <end position="571"/>
    </location>
</feature>
<feature type="domain" description="Urease" evidence="1">
    <location>
        <begin position="133"/>
        <end position="571"/>
    </location>
</feature>
<feature type="active site" description="Proton donor" evidence="1">
    <location>
        <position position="324"/>
    </location>
</feature>
<feature type="binding site" evidence="1">
    <location>
        <position position="138"/>
    </location>
    <ligand>
        <name>Ni(2+)</name>
        <dbReference type="ChEBI" id="CHEBI:49786"/>
        <label>1</label>
    </ligand>
</feature>
<feature type="binding site" evidence="1">
    <location>
        <position position="140"/>
    </location>
    <ligand>
        <name>Ni(2+)</name>
        <dbReference type="ChEBI" id="CHEBI:49786"/>
        <label>1</label>
    </ligand>
</feature>
<feature type="binding site" description="via carbamate group" evidence="1">
    <location>
        <position position="221"/>
    </location>
    <ligand>
        <name>Ni(2+)</name>
        <dbReference type="ChEBI" id="CHEBI:49786"/>
        <label>1</label>
    </ligand>
</feature>
<feature type="binding site" description="via carbamate group" evidence="1">
    <location>
        <position position="221"/>
    </location>
    <ligand>
        <name>Ni(2+)</name>
        <dbReference type="ChEBI" id="CHEBI:49786"/>
        <label>2</label>
    </ligand>
</feature>
<feature type="binding site" evidence="1">
    <location>
        <position position="223"/>
    </location>
    <ligand>
        <name>substrate</name>
    </ligand>
</feature>
<feature type="binding site" evidence="1">
    <location>
        <position position="250"/>
    </location>
    <ligand>
        <name>Ni(2+)</name>
        <dbReference type="ChEBI" id="CHEBI:49786"/>
        <label>2</label>
    </ligand>
</feature>
<feature type="binding site" evidence="1">
    <location>
        <position position="276"/>
    </location>
    <ligand>
        <name>Ni(2+)</name>
        <dbReference type="ChEBI" id="CHEBI:49786"/>
        <label>2</label>
    </ligand>
</feature>
<feature type="binding site" evidence="1">
    <location>
        <position position="364"/>
    </location>
    <ligand>
        <name>Ni(2+)</name>
        <dbReference type="ChEBI" id="CHEBI:49786"/>
        <label>1</label>
    </ligand>
</feature>
<feature type="modified residue" description="N6-carboxylysine" evidence="1">
    <location>
        <position position="221"/>
    </location>
</feature>
<dbReference type="EC" id="3.5.1.5" evidence="1"/>
<dbReference type="EMBL" id="AJ938182">
    <property type="protein sequence ID" value="CAI81851.1"/>
    <property type="molecule type" value="Genomic_DNA"/>
</dbReference>
<dbReference type="RefSeq" id="WP_000008679.1">
    <property type="nucleotide sequence ID" value="NC_007622.1"/>
</dbReference>
<dbReference type="SMR" id="Q2YYQ6"/>
<dbReference type="KEGG" id="sab:SAB2162"/>
<dbReference type="HOGENOM" id="CLU_000980_0_0_9"/>
<dbReference type="UniPathway" id="UPA00258">
    <property type="reaction ID" value="UER00370"/>
</dbReference>
<dbReference type="GO" id="GO:0005737">
    <property type="term" value="C:cytoplasm"/>
    <property type="evidence" value="ECO:0007669"/>
    <property type="project" value="UniProtKB-SubCell"/>
</dbReference>
<dbReference type="GO" id="GO:0016151">
    <property type="term" value="F:nickel cation binding"/>
    <property type="evidence" value="ECO:0007669"/>
    <property type="project" value="UniProtKB-UniRule"/>
</dbReference>
<dbReference type="GO" id="GO:0009039">
    <property type="term" value="F:urease activity"/>
    <property type="evidence" value="ECO:0007669"/>
    <property type="project" value="UniProtKB-UniRule"/>
</dbReference>
<dbReference type="GO" id="GO:0043419">
    <property type="term" value="P:urea catabolic process"/>
    <property type="evidence" value="ECO:0007669"/>
    <property type="project" value="UniProtKB-UniRule"/>
</dbReference>
<dbReference type="CDD" id="cd00375">
    <property type="entry name" value="Urease_alpha"/>
    <property type="match status" value="1"/>
</dbReference>
<dbReference type="Gene3D" id="3.20.20.140">
    <property type="entry name" value="Metal-dependent hydrolases"/>
    <property type="match status" value="1"/>
</dbReference>
<dbReference type="Gene3D" id="2.30.40.10">
    <property type="entry name" value="Urease, subunit C, domain 1"/>
    <property type="match status" value="1"/>
</dbReference>
<dbReference type="HAMAP" id="MF_01953">
    <property type="entry name" value="Urease_alpha"/>
    <property type="match status" value="1"/>
</dbReference>
<dbReference type="InterPro" id="IPR006680">
    <property type="entry name" value="Amidohydro-rel"/>
</dbReference>
<dbReference type="InterPro" id="IPR011059">
    <property type="entry name" value="Metal-dep_hydrolase_composite"/>
</dbReference>
<dbReference type="InterPro" id="IPR032466">
    <property type="entry name" value="Metal_Hydrolase"/>
</dbReference>
<dbReference type="InterPro" id="IPR011612">
    <property type="entry name" value="Urease_alpha_N_dom"/>
</dbReference>
<dbReference type="InterPro" id="IPR050112">
    <property type="entry name" value="Urease_alpha_subunit"/>
</dbReference>
<dbReference type="InterPro" id="IPR017950">
    <property type="entry name" value="Urease_AS"/>
</dbReference>
<dbReference type="InterPro" id="IPR005848">
    <property type="entry name" value="Urease_asu"/>
</dbReference>
<dbReference type="InterPro" id="IPR017951">
    <property type="entry name" value="Urease_asu_c"/>
</dbReference>
<dbReference type="InterPro" id="IPR029754">
    <property type="entry name" value="Urease_Ni-bd"/>
</dbReference>
<dbReference type="NCBIfam" id="NF009686">
    <property type="entry name" value="PRK13207.1"/>
    <property type="match status" value="1"/>
</dbReference>
<dbReference type="NCBIfam" id="TIGR01792">
    <property type="entry name" value="urease_alph"/>
    <property type="match status" value="1"/>
</dbReference>
<dbReference type="PANTHER" id="PTHR43440">
    <property type="entry name" value="UREASE"/>
    <property type="match status" value="1"/>
</dbReference>
<dbReference type="PANTHER" id="PTHR43440:SF1">
    <property type="entry name" value="UREASE"/>
    <property type="match status" value="1"/>
</dbReference>
<dbReference type="Pfam" id="PF01979">
    <property type="entry name" value="Amidohydro_1"/>
    <property type="match status" value="1"/>
</dbReference>
<dbReference type="Pfam" id="PF00449">
    <property type="entry name" value="Urease_alpha"/>
    <property type="match status" value="1"/>
</dbReference>
<dbReference type="PRINTS" id="PR01752">
    <property type="entry name" value="UREASE"/>
</dbReference>
<dbReference type="SUPFAM" id="SSF51338">
    <property type="entry name" value="Composite domain of metallo-dependent hydrolases"/>
    <property type="match status" value="1"/>
</dbReference>
<dbReference type="SUPFAM" id="SSF51556">
    <property type="entry name" value="Metallo-dependent hydrolases"/>
    <property type="match status" value="1"/>
</dbReference>
<dbReference type="PROSITE" id="PS01120">
    <property type="entry name" value="UREASE_1"/>
    <property type="match status" value="1"/>
</dbReference>
<dbReference type="PROSITE" id="PS00145">
    <property type="entry name" value="UREASE_2"/>
    <property type="match status" value="1"/>
</dbReference>
<dbReference type="PROSITE" id="PS51368">
    <property type="entry name" value="UREASE_3"/>
    <property type="match status" value="1"/>
</dbReference>
<gene>
    <name evidence="1" type="primary">ureC</name>
    <name type="ordered locus">SAB2162</name>
</gene>
<proteinExistence type="inferred from homology"/>
<accession>Q2YYQ6</accession>
<comment type="catalytic activity">
    <reaction evidence="1">
        <text>urea + 2 H2O + H(+) = hydrogencarbonate + 2 NH4(+)</text>
        <dbReference type="Rhea" id="RHEA:20557"/>
        <dbReference type="ChEBI" id="CHEBI:15377"/>
        <dbReference type="ChEBI" id="CHEBI:15378"/>
        <dbReference type="ChEBI" id="CHEBI:16199"/>
        <dbReference type="ChEBI" id="CHEBI:17544"/>
        <dbReference type="ChEBI" id="CHEBI:28938"/>
        <dbReference type="EC" id="3.5.1.5"/>
    </reaction>
</comment>
<comment type="cofactor">
    <cofactor evidence="1">
        <name>Ni cation</name>
        <dbReference type="ChEBI" id="CHEBI:25516"/>
    </cofactor>
    <text evidence="1">Binds 2 nickel ions per subunit.</text>
</comment>
<comment type="pathway">
    <text evidence="1">Nitrogen metabolism; urea degradation; CO(2) and NH(3) from urea (urease route): step 1/1.</text>
</comment>
<comment type="subunit">
    <text evidence="1">Heterotrimer of UreA (gamma), UreB (beta) and UreC (alpha) subunits. Three heterotrimers associate to form the active enzyme.</text>
</comment>
<comment type="subcellular location">
    <subcellularLocation>
        <location evidence="1">Cytoplasm</location>
    </subcellularLocation>
</comment>
<comment type="PTM">
    <text evidence="1">Carboxylation allows a single lysine to coordinate two nickel ions.</text>
</comment>
<comment type="similarity">
    <text evidence="1">Belongs to the metallo-dependent hydrolases superfamily. Urease alpha subunit family.</text>
</comment>
<evidence type="ECO:0000255" key="1">
    <source>
        <dbReference type="HAMAP-Rule" id="MF_01953"/>
    </source>
</evidence>
<name>URE1_STAAB</name>
<sequence>MSFKMTQNQYTSLYGPTVGDSIRLGDTNLFAQIEKDYAVYGEEATFGGGKSIRDGMAQNPRVTRDDVNVADLVISNAVIIDYDKVVKADIGIKNGYIFAIGNAGNPDIMDNVDIIIGSTTDIIAAEGKIVTAGGIDTHVHFINPEQAEVALESGITTHIGGGTGASEGSKATTVTPGPWHIHRMLEAAEGLPINVGFTGKGQATNPTALIEQINAGAIGLKVHEDWGATPSALSHALDVADEFDVQIALHADTLNEAGFMEDTMAAVKDRVLHMYHTEGAGGGHTPDLIKSAAFSNILPSSTNPTLPYTHNTVDEHLDMVMITHHLNAAIPEDIAFADSRIRKETIAAEDVLQDMGVFSMISSDSQAMGRVGEVITRTWQVAHRMKEQRGPLDGDFEHNDNNRIKRYIAKYTINPAITHGISEYVGSIEPGKLADIVLWDPIFFGVKPELVVKGGLINSAVNGDANGSIPTSEPMKYRKMYGQYGGNLTSTSMTFVSKTAYENGINRALNLKRMVRPVKNIRQLSKADMKNNSATPKLDVDPQTYEVYVDGEKITSNAATELPLTQRYFLF</sequence>
<keyword id="KW-0963">Cytoplasm</keyword>
<keyword id="KW-0378">Hydrolase</keyword>
<keyword id="KW-0479">Metal-binding</keyword>
<keyword id="KW-0533">Nickel</keyword>
<organism>
    <name type="scientific">Staphylococcus aureus (strain bovine RF122 / ET3-1)</name>
    <dbReference type="NCBI Taxonomy" id="273036"/>
    <lineage>
        <taxon>Bacteria</taxon>
        <taxon>Bacillati</taxon>
        <taxon>Bacillota</taxon>
        <taxon>Bacilli</taxon>
        <taxon>Bacillales</taxon>
        <taxon>Staphylococcaceae</taxon>
        <taxon>Staphylococcus</taxon>
    </lineage>
</organism>
<protein>
    <recommendedName>
        <fullName evidence="1">Urease subunit alpha</fullName>
        <ecNumber evidence="1">3.5.1.5</ecNumber>
    </recommendedName>
    <alternativeName>
        <fullName evidence="1">Urea amidohydrolase subunit alpha</fullName>
    </alternativeName>
</protein>
<reference key="1">
    <citation type="journal article" date="2007" name="PLoS ONE">
        <title>Molecular correlates of host specialization in Staphylococcus aureus.</title>
        <authorList>
            <person name="Herron-Olson L."/>
            <person name="Fitzgerald J.R."/>
            <person name="Musser J.M."/>
            <person name="Kapur V."/>
        </authorList>
    </citation>
    <scope>NUCLEOTIDE SEQUENCE [LARGE SCALE GENOMIC DNA]</scope>
    <source>
        <strain>bovine RF122 / ET3-1</strain>
    </source>
</reference>